<comment type="function">
    <text evidence="1">Murein-degrading enzyme. May play a role in recycling of muropeptides during cell elongation and/or cell division. Preferentially cleaves at a distance of more than two disaccharide units from the ends of the glycan chain.</text>
</comment>
<comment type="catalytic activity">
    <reaction evidence="1">
        <text>Endolytic cleavage of the (1-&gt;4)-beta-glycosidic linkage between N-acetylmuramic acid (MurNAc) and N-acetylglucosamine (GlcNAc) residues in peptidoglycan with concomitant formation of a 1,6-anhydrobond in the MurNAc residue.</text>
        <dbReference type="EC" id="4.2.2.n2"/>
    </reaction>
</comment>
<comment type="subcellular location">
    <subcellularLocation>
        <location evidence="1">Cell outer membrane</location>
        <topology evidence="1">Lipid-anchor</topology>
    </subcellularLocation>
</comment>
<comment type="similarity">
    <text evidence="1">Belongs to the transglycosylase Slt family.</text>
</comment>
<keyword id="KW-0998">Cell outer membrane</keyword>
<keyword id="KW-0961">Cell wall biogenesis/degradation</keyword>
<keyword id="KW-0449">Lipoprotein</keyword>
<keyword id="KW-0456">Lyase</keyword>
<keyword id="KW-0472">Membrane</keyword>
<keyword id="KW-0564">Palmitate</keyword>
<keyword id="KW-1185">Reference proteome</keyword>
<keyword id="KW-0732">Signal</keyword>
<proteinExistence type="inferred from homology"/>
<gene>
    <name evidence="1" type="primary">emtA</name>
    <name type="ordered locus">EC55989_1289</name>
</gene>
<dbReference type="EC" id="4.2.2.n2" evidence="1"/>
<dbReference type="EMBL" id="CU928145">
    <property type="protein sequence ID" value="CAU97147.1"/>
    <property type="molecule type" value="Genomic_DNA"/>
</dbReference>
<dbReference type="RefSeq" id="WP_001295616.1">
    <property type="nucleotide sequence ID" value="NC_011748.1"/>
</dbReference>
<dbReference type="SMR" id="B7LGV3"/>
<dbReference type="CAZy" id="GH23">
    <property type="family name" value="Glycoside Hydrolase Family 23"/>
</dbReference>
<dbReference type="GeneID" id="75171299"/>
<dbReference type="KEGG" id="eck:EC55989_1289"/>
<dbReference type="HOGENOM" id="CLU_103257_0_0_6"/>
<dbReference type="Proteomes" id="UP000000746">
    <property type="component" value="Chromosome"/>
</dbReference>
<dbReference type="GO" id="GO:0009279">
    <property type="term" value="C:cell outer membrane"/>
    <property type="evidence" value="ECO:0007669"/>
    <property type="project" value="UniProtKB-SubCell"/>
</dbReference>
<dbReference type="GO" id="GO:0008932">
    <property type="term" value="F:lytic endotransglycosylase activity"/>
    <property type="evidence" value="ECO:0007669"/>
    <property type="project" value="InterPro"/>
</dbReference>
<dbReference type="GO" id="GO:0016998">
    <property type="term" value="P:cell wall macromolecule catabolic process"/>
    <property type="evidence" value="ECO:0007669"/>
    <property type="project" value="UniProtKB-UniRule"/>
</dbReference>
<dbReference type="GO" id="GO:0071555">
    <property type="term" value="P:cell wall organization"/>
    <property type="evidence" value="ECO:0007669"/>
    <property type="project" value="UniProtKB-KW"/>
</dbReference>
<dbReference type="GO" id="GO:0000270">
    <property type="term" value="P:peptidoglycan metabolic process"/>
    <property type="evidence" value="ECO:0007669"/>
    <property type="project" value="InterPro"/>
</dbReference>
<dbReference type="CDD" id="cd16893">
    <property type="entry name" value="LT_MltC_MltE"/>
    <property type="match status" value="1"/>
</dbReference>
<dbReference type="FunFam" id="1.10.530.10:FF:000007">
    <property type="entry name" value="Endo-type membrane-bound lytic murein transglycosylase A"/>
    <property type="match status" value="1"/>
</dbReference>
<dbReference type="Gene3D" id="1.10.530.10">
    <property type="match status" value="1"/>
</dbReference>
<dbReference type="HAMAP" id="MF_01381">
    <property type="entry name" value="EmtA"/>
    <property type="match status" value="1"/>
</dbReference>
<dbReference type="InterPro" id="IPR023946">
    <property type="entry name" value="EmtA"/>
</dbReference>
<dbReference type="InterPro" id="IPR023346">
    <property type="entry name" value="Lysozyme-like_dom_sf"/>
</dbReference>
<dbReference type="InterPro" id="IPR000189">
    <property type="entry name" value="Transglyc_AS"/>
</dbReference>
<dbReference type="InterPro" id="IPR008258">
    <property type="entry name" value="Transglycosylase_SLT_dom_1"/>
</dbReference>
<dbReference type="NCBIfam" id="NF012014">
    <property type="entry name" value="PRK15470.1"/>
    <property type="match status" value="1"/>
</dbReference>
<dbReference type="PANTHER" id="PTHR37423:SF4">
    <property type="entry name" value="ENDO-TYPE MEMBRANE-BOUND LYTIC MUREIN TRANSGLYCOSYLASE A"/>
    <property type="match status" value="1"/>
</dbReference>
<dbReference type="PANTHER" id="PTHR37423">
    <property type="entry name" value="SOLUBLE LYTIC MUREIN TRANSGLYCOSYLASE-RELATED"/>
    <property type="match status" value="1"/>
</dbReference>
<dbReference type="Pfam" id="PF01464">
    <property type="entry name" value="SLT"/>
    <property type="match status" value="1"/>
</dbReference>
<dbReference type="SUPFAM" id="SSF53955">
    <property type="entry name" value="Lysozyme-like"/>
    <property type="match status" value="1"/>
</dbReference>
<dbReference type="PROSITE" id="PS51257">
    <property type="entry name" value="PROKAR_LIPOPROTEIN"/>
    <property type="match status" value="1"/>
</dbReference>
<dbReference type="PROSITE" id="PS00922">
    <property type="entry name" value="TRANSGLYCOSYLASE"/>
    <property type="match status" value="1"/>
</dbReference>
<reference key="1">
    <citation type="journal article" date="2009" name="PLoS Genet.">
        <title>Organised genome dynamics in the Escherichia coli species results in highly diverse adaptive paths.</title>
        <authorList>
            <person name="Touchon M."/>
            <person name="Hoede C."/>
            <person name="Tenaillon O."/>
            <person name="Barbe V."/>
            <person name="Baeriswyl S."/>
            <person name="Bidet P."/>
            <person name="Bingen E."/>
            <person name="Bonacorsi S."/>
            <person name="Bouchier C."/>
            <person name="Bouvet O."/>
            <person name="Calteau A."/>
            <person name="Chiapello H."/>
            <person name="Clermont O."/>
            <person name="Cruveiller S."/>
            <person name="Danchin A."/>
            <person name="Diard M."/>
            <person name="Dossat C."/>
            <person name="Karoui M.E."/>
            <person name="Frapy E."/>
            <person name="Garry L."/>
            <person name="Ghigo J.M."/>
            <person name="Gilles A.M."/>
            <person name="Johnson J."/>
            <person name="Le Bouguenec C."/>
            <person name="Lescat M."/>
            <person name="Mangenot S."/>
            <person name="Martinez-Jehanne V."/>
            <person name="Matic I."/>
            <person name="Nassif X."/>
            <person name="Oztas S."/>
            <person name="Petit M.A."/>
            <person name="Pichon C."/>
            <person name="Rouy Z."/>
            <person name="Ruf C.S."/>
            <person name="Schneider D."/>
            <person name="Tourret J."/>
            <person name="Vacherie B."/>
            <person name="Vallenet D."/>
            <person name="Medigue C."/>
            <person name="Rocha E.P.C."/>
            <person name="Denamur E."/>
        </authorList>
    </citation>
    <scope>NUCLEOTIDE SEQUENCE [LARGE SCALE GENOMIC DNA]</scope>
    <source>
        <strain>55989 / EAEC</strain>
    </source>
</reference>
<sequence length="203" mass="22213">MKLRWFAFLIVLLAGCSSKHDYTNPPWNAKVPVQRAMQWMPISQKAGAAWGVDPQLITAIIAIESGGNPNAVSKSNAIGLMQLKASTSGRDVYRRMGWSGEPTTSELKNPERNISMGAAYLNILETGPLAGIEDPKVLQYALVVSYANGAGALLRTFSSDRKKAISKINDLDADEFLDHVARNHPAPQAPRYIYKLEQALDAM</sequence>
<organism>
    <name type="scientific">Escherichia coli (strain 55989 / EAEC)</name>
    <dbReference type="NCBI Taxonomy" id="585055"/>
    <lineage>
        <taxon>Bacteria</taxon>
        <taxon>Pseudomonadati</taxon>
        <taxon>Pseudomonadota</taxon>
        <taxon>Gammaproteobacteria</taxon>
        <taxon>Enterobacterales</taxon>
        <taxon>Enterobacteriaceae</taxon>
        <taxon>Escherichia</taxon>
    </lineage>
</organism>
<name>EMTA_ECO55</name>
<evidence type="ECO:0000255" key="1">
    <source>
        <dbReference type="HAMAP-Rule" id="MF_01381"/>
    </source>
</evidence>
<protein>
    <recommendedName>
        <fullName evidence="1">Endo-type membrane-bound lytic murein transglycosylase A</fullName>
        <ecNumber evidence="1">4.2.2.n2</ecNumber>
    </recommendedName>
    <alternativeName>
        <fullName evidence="1">Peptidoglycan lytic endotransglycosylase</fullName>
    </alternativeName>
</protein>
<accession>B7LGV3</accession>
<feature type="signal peptide" evidence="1">
    <location>
        <begin position="1"/>
        <end position="15"/>
    </location>
</feature>
<feature type="chain" id="PRO_1000184207" description="Endo-type membrane-bound lytic murein transglycosylase A">
    <location>
        <begin position="16"/>
        <end position="203"/>
    </location>
</feature>
<feature type="lipid moiety-binding region" description="N-palmitoyl cysteine" evidence="1">
    <location>
        <position position="16"/>
    </location>
</feature>
<feature type="lipid moiety-binding region" description="S-diacylglycerol cysteine" evidence="1">
    <location>
        <position position="16"/>
    </location>
</feature>